<reference key="1">
    <citation type="journal article" date="2001" name="Mol. Biol. Cell">
        <title>pkl1(+)and klp2(+): two kinesins of the Kar3 subfamily in fission yeast perform different functions in both mitosis and meiosis.</title>
        <authorList>
            <person name="Troxell C.L."/>
            <person name="Sweezy M.A."/>
            <person name="West R.R."/>
            <person name="Reed K.D."/>
            <person name="Carson B.D."/>
            <person name="Pidoux A.L."/>
            <person name="Cande W.Z."/>
            <person name="McIntosh J.R."/>
        </authorList>
    </citation>
    <scope>NUCLEOTIDE SEQUENCE [GENOMIC DNA / MRNA]</scope>
    <scope>FUNCTION</scope>
    <scope>SUBCELLULAR LOCATION</scope>
</reference>
<reference key="2">
    <citation type="journal article" date="2002" name="Nature">
        <title>The genome sequence of Schizosaccharomyces pombe.</title>
        <authorList>
            <person name="Wood V."/>
            <person name="Gwilliam R."/>
            <person name="Rajandream M.A."/>
            <person name="Lyne M.H."/>
            <person name="Lyne R."/>
            <person name="Stewart A."/>
            <person name="Sgouros J.G."/>
            <person name="Peat N."/>
            <person name="Hayles J."/>
            <person name="Baker S.G."/>
            <person name="Basham D."/>
            <person name="Bowman S."/>
            <person name="Brooks K."/>
            <person name="Brown D."/>
            <person name="Brown S."/>
            <person name="Chillingworth T."/>
            <person name="Churcher C.M."/>
            <person name="Collins M."/>
            <person name="Connor R."/>
            <person name="Cronin A."/>
            <person name="Davis P."/>
            <person name="Feltwell T."/>
            <person name="Fraser A."/>
            <person name="Gentles S."/>
            <person name="Goble A."/>
            <person name="Hamlin N."/>
            <person name="Harris D.E."/>
            <person name="Hidalgo J."/>
            <person name="Hodgson G."/>
            <person name="Holroyd S."/>
            <person name="Hornsby T."/>
            <person name="Howarth S."/>
            <person name="Huckle E.J."/>
            <person name="Hunt S."/>
            <person name="Jagels K."/>
            <person name="James K.D."/>
            <person name="Jones L."/>
            <person name="Jones M."/>
            <person name="Leather S."/>
            <person name="McDonald S."/>
            <person name="McLean J."/>
            <person name="Mooney P."/>
            <person name="Moule S."/>
            <person name="Mungall K.L."/>
            <person name="Murphy L.D."/>
            <person name="Niblett D."/>
            <person name="Odell C."/>
            <person name="Oliver K."/>
            <person name="O'Neil S."/>
            <person name="Pearson D."/>
            <person name="Quail M.A."/>
            <person name="Rabbinowitsch E."/>
            <person name="Rutherford K.M."/>
            <person name="Rutter S."/>
            <person name="Saunders D."/>
            <person name="Seeger K."/>
            <person name="Sharp S."/>
            <person name="Skelton J."/>
            <person name="Simmonds M.N."/>
            <person name="Squares R."/>
            <person name="Squares S."/>
            <person name="Stevens K."/>
            <person name="Taylor K."/>
            <person name="Taylor R.G."/>
            <person name="Tivey A."/>
            <person name="Walsh S.V."/>
            <person name="Warren T."/>
            <person name="Whitehead S."/>
            <person name="Woodward J.R."/>
            <person name="Volckaert G."/>
            <person name="Aert R."/>
            <person name="Robben J."/>
            <person name="Grymonprez B."/>
            <person name="Weltjens I."/>
            <person name="Vanstreels E."/>
            <person name="Rieger M."/>
            <person name="Schaefer M."/>
            <person name="Mueller-Auer S."/>
            <person name="Gabel C."/>
            <person name="Fuchs M."/>
            <person name="Duesterhoeft A."/>
            <person name="Fritzc C."/>
            <person name="Holzer E."/>
            <person name="Moestl D."/>
            <person name="Hilbert H."/>
            <person name="Borzym K."/>
            <person name="Langer I."/>
            <person name="Beck A."/>
            <person name="Lehrach H."/>
            <person name="Reinhardt R."/>
            <person name="Pohl T.M."/>
            <person name="Eger P."/>
            <person name="Zimmermann W."/>
            <person name="Wedler H."/>
            <person name="Wambutt R."/>
            <person name="Purnelle B."/>
            <person name="Goffeau A."/>
            <person name="Cadieu E."/>
            <person name="Dreano S."/>
            <person name="Gloux S."/>
            <person name="Lelaure V."/>
            <person name="Mottier S."/>
            <person name="Galibert F."/>
            <person name="Aves S.J."/>
            <person name="Xiang Z."/>
            <person name="Hunt C."/>
            <person name="Moore K."/>
            <person name="Hurst S.M."/>
            <person name="Lucas M."/>
            <person name="Rochet M."/>
            <person name="Gaillardin C."/>
            <person name="Tallada V.A."/>
            <person name="Garzon A."/>
            <person name="Thode G."/>
            <person name="Daga R.R."/>
            <person name="Cruzado L."/>
            <person name="Jimenez J."/>
            <person name="Sanchez M."/>
            <person name="del Rey F."/>
            <person name="Benito J."/>
            <person name="Dominguez A."/>
            <person name="Revuelta J.L."/>
            <person name="Moreno S."/>
            <person name="Armstrong J."/>
            <person name="Forsburg S.L."/>
            <person name="Cerutti L."/>
            <person name="Lowe T."/>
            <person name="McCombie W.R."/>
            <person name="Paulsen I."/>
            <person name="Potashkin J."/>
            <person name="Shpakovski G.V."/>
            <person name="Ussery D."/>
            <person name="Barrell B.G."/>
            <person name="Nurse P."/>
        </authorList>
    </citation>
    <scope>NUCLEOTIDE SEQUENCE [LARGE SCALE GENOMIC DNA]</scope>
    <source>
        <strain>972 / ATCC 24843</strain>
    </source>
</reference>
<reference key="3">
    <citation type="journal article" date="2005" name="Science">
        <title>The kinesin Klp2 mediates polarization of interphase microtubules in fission yeast.</title>
        <authorList>
            <person name="Carazo-Salas R.E."/>
            <person name="Antony C."/>
            <person name="Nurse P."/>
        </authorList>
    </citation>
    <scope>FUNCTION</scope>
    <scope>SUBCELLULAR LOCATION</scope>
</reference>
<reference key="4">
    <citation type="journal article" date="2008" name="Mol. Biol. Cell">
        <title>Sister kinetochore recapture in fission yeast occurs by two distinct mechanisms, both requiring Dam1 and Klp2.</title>
        <authorList>
            <person name="Gachet Y."/>
            <person name="Reyes C."/>
            <person name="Courtheoux T."/>
            <person name="Goldstone S."/>
            <person name="Gay G."/>
            <person name="Serrurier C."/>
            <person name="Tournier S."/>
        </authorList>
    </citation>
    <scope>FUNCTION</scope>
    <scope>SUBCELLULAR LOCATION</scope>
</reference>
<protein>
    <recommendedName>
        <fullName>Kinesin-like protein 2</fullName>
        <ecNumber evidence="1">5.6.1.4</ecNumber>
    </recommendedName>
</protein>
<evidence type="ECO:0000250" key="1">
    <source>
        <dbReference type="UniProtKB" id="P17119"/>
    </source>
</evidence>
<evidence type="ECO:0000255" key="2"/>
<evidence type="ECO:0000255" key="3">
    <source>
        <dbReference type="PROSITE-ProRule" id="PRU00283"/>
    </source>
</evidence>
<evidence type="ECO:0000256" key="4">
    <source>
        <dbReference type="SAM" id="MobiDB-lite"/>
    </source>
</evidence>
<evidence type="ECO:0000269" key="5">
    <source>
    </source>
</evidence>
<evidence type="ECO:0000269" key="6">
    <source>
    </source>
</evidence>
<evidence type="ECO:0000269" key="7">
    <source>
    </source>
</evidence>
<evidence type="ECO:0000312" key="8">
    <source>
        <dbReference type="PomBase" id="SPAC664.10"/>
    </source>
</evidence>
<name>KAR3_SCHPO</name>
<feature type="chain" id="PRO_0000125386" description="Kinesin-like protein 2">
    <location>
        <begin position="1"/>
        <end position="817"/>
    </location>
</feature>
<feature type="domain" description="Kinesin motor" evidence="3">
    <location>
        <begin position="473"/>
        <end position="807"/>
    </location>
</feature>
<feature type="region of interest" description="Disordered" evidence="4">
    <location>
        <begin position="1"/>
        <end position="155"/>
    </location>
</feature>
<feature type="coiled-coil region" evidence="2">
    <location>
        <begin position="155"/>
        <end position="242"/>
    </location>
</feature>
<feature type="compositionally biased region" description="Low complexity" evidence="4">
    <location>
        <begin position="8"/>
        <end position="23"/>
    </location>
</feature>
<feature type="compositionally biased region" description="Polar residues" evidence="4">
    <location>
        <begin position="39"/>
        <end position="60"/>
    </location>
</feature>
<feature type="compositionally biased region" description="Low complexity" evidence="4">
    <location>
        <begin position="76"/>
        <end position="86"/>
    </location>
</feature>
<feature type="compositionally biased region" description="Polar residues" evidence="4">
    <location>
        <begin position="106"/>
        <end position="116"/>
    </location>
</feature>
<feature type="compositionally biased region" description="Low complexity" evidence="4">
    <location>
        <begin position="122"/>
        <end position="132"/>
    </location>
</feature>
<feature type="binding site" evidence="1">
    <location>
        <position position="473"/>
    </location>
    <ligand>
        <name>ATP</name>
        <dbReference type="ChEBI" id="CHEBI:30616"/>
    </ligand>
</feature>
<feature type="binding site" evidence="1">
    <location>
        <position position="475"/>
    </location>
    <ligand>
        <name>ATP</name>
        <dbReference type="ChEBI" id="CHEBI:30616"/>
    </ligand>
</feature>
<feature type="binding site" evidence="1">
    <location>
        <position position="479"/>
    </location>
    <ligand>
        <name>ATP</name>
        <dbReference type="ChEBI" id="CHEBI:30616"/>
    </ligand>
</feature>
<feature type="binding site" evidence="1">
    <location>
        <position position="543"/>
    </location>
    <ligand>
        <name>ATP</name>
        <dbReference type="ChEBI" id="CHEBI:30616"/>
    </ligand>
</feature>
<feature type="binding site" evidence="1">
    <location>
        <position position="566"/>
    </location>
    <ligand>
        <name>ATP</name>
        <dbReference type="ChEBI" id="CHEBI:30616"/>
    </ligand>
</feature>
<feature type="binding site" evidence="1">
    <location>
        <position position="567"/>
    </location>
    <ligand>
        <name>ATP</name>
        <dbReference type="ChEBI" id="CHEBI:30616"/>
    </ligand>
</feature>
<feature type="binding site" evidence="1">
    <location>
        <position position="568"/>
    </location>
    <ligand>
        <name>ATP</name>
        <dbReference type="ChEBI" id="CHEBI:30616"/>
    </ligand>
</feature>
<feature type="binding site" evidence="1">
    <location>
        <position position="569"/>
    </location>
    <ligand>
        <name>ATP</name>
        <dbReference type="ChEBI" id="CHEBI:30616"/>
    </ligand>
</feature>
<feature type="binding site" evidence="1">
    <location>
        <position position="570"/>
    </location>
    <ligand>
        <name>ATP</name>
        <dbReference type="ChEBI" id="CHEBI:30616"/>
    </ligand>
</feature>
<feature type="binding site" evidence="1">
    <location>
        <position position="778"/>
    </location>
    <ligand>
        <name>ATP</name>
        <dbReference type="ChEBI" id="CHEBI:30616"/>
    </ligand>
</feature>
<gene>
    <name evidence="8" type="primary">klp2</name>
    <name evidence="8" type="ORF">SPAC664.10</name>
</gene>
<keyword id="KW-0067">ATP-binding</keyword>
<keyword id="KW-0175">Coiled coil</keyword>
<keyword id="KW-0963">Cytoplasm</keyword>
<keyword id="KW-0206">Cytoskeleton</keyword>
<keyword id="KW-0413">Isomerase</keyword>
<keyword id="KW-0493">Microtubule</keyword>
<keyword id="KW-0505">Motor protein</keyword>
<keyword id="KW-0547">Nucleotide-binding</keyword>
<keyword id="KW-0539">Nucleus</keyword>
<keyword id="KW-1185">Reference proteome</keyword>
<proteinExistence type="inferred from homology"/>
<organism>
    <name type="scientific">Schizosaccharomyces pombe (strain 972 / ATCC 24843)</name>
    <name type="common">Fission yeast</name>
    <dbReference type="NCBI Taxonomy" id="284812"/>
    <lineage>
        <taxon>Eukaryota</taxon>
        <taxon>Fungi</taxon>
        <taxon>Dikarya</taxon>
        <taxon>Ascomycota</taxon>
        <taxon>Taphrinomycotina</taxon>
        <taxon>Schizosaccharomycetes</taxon>
        <taxon>Schizosaccharomycetales</taxon>
        <taxon>Schizosaccharomycetaceae</taxon>
        <taxon>Schizosaccharomyces</taxon>
    </lineage>
</organism>
<comment type="function">
    <text evidence="5 6 7">Minus end-directed microtubule (MT) motor that is involved in spindle microtubule shortening, kinetochore capture, and polarization of cytoplasmic microtubules (PubMed:11694582, PubMed:16002618). During mitosis, promotes spindle microtubule shortening by depolymerization (PubMed:11694582). During metaphase, involved in the recapture of kinetochores displaced from the spindle and their transport towards the spindle pole body; promotes transport both by microtubule end-on pulling and by lateral sliding along the side of the microtubule (PubMed:18256284). During interphase, required for the polarization of cytoplasmic microtubules where it orients the microtubule plus ends toward the cell ends and the minus ends toward the cell center (PubMed:16002618). Required for karyogamy (PubMed:11694582).</text>
</comment>
<comment type="catalytic activity">
    <reaction evidence="1">
        <text>ATP + H2O = ADP + phosphate + H(+)</text>
        <dbReference type="Rhea" id="RHEA:13065"/>
        <dbReference type="ChEBI" id="CHEBI:15377"/>
        <dbReference type="ChEBI" id="CHEBI:15378"/>
        <dbReference type="ChEBI" id="CHEBI:30616"/>
        <dbReference type="ChEBI" id="CHEBI:43474"/>
        <dbReference type="ChEBI" id="CHEBI:456216"/>
    </reaction>
    <physiologicalReaction direction="left-to-right" evidence="1">
        <dbReference type="Rhea" id="RHEA:13066"/>
    </physiologicalReaction>
</comment>
<comment type="catalytic activity">
    <reaction evidence="1">
        <text>ATP + H2O + a kinesin associated with a microtubule at position (n) = ADP + phosphate + a kinesin associated with a microtubule at position (n-1, toward the minus end).</text>
        <dbReference type="EC" id="5.6.1.4"/>
    </reaction>
</comment>
<comment type="subcellular location">
    <subcellularLocation>
        <location evidence="6">Cytoplasm</location>
        <location evidence="6">Cytoskeleton</location>
    </subcellularLocation>
    <subcellularLocation>
        <location evidence="7">Cytoplasm</location>
        <location evidence="7">Cytoskeleton</location>
        <location evidence="7">Spindle</location>
    </subcellularLocation>
    <subcellularLocation>
        <location evidence="6 7">Nucleus</location>
    </subcellularLocation>
    <text evidence="6 7">When in the nucleus, it associates with chromatin (PubMed:16002618). Localizes to nuclear microtubules (PubMed:18256284).</text>
</comment>
<comment type="similarity">
    <text evidence="3">Belongs to the TRAFAC class myosin-kinesin ATPase superfamily. Kinesin family. NCD subfamily.</text>
</comment>
<accession>Q9US03</accession>
<sequence>MEEEGHKSLTSHLPQSSSSLSQSREIAKEFTSNIPPPTIKTNSSSSNILKPRLSLQNEVNQLKPAKFPSKMLPPGSLASVKSSSLAKKARPFTASSNPRMPKSAHPISSRSVSASSHFGRPASAVSSSLNSSDDVRSMSDESMESYNDEKSVNASALRTTEDRLRSMEMAYAQLSAKVIPSPSKRPANYKFYEQRIAMLEESLEVERSRTSELQEQFSVALREKAEAEANKIVSQKGMESLEIMLNSMKSENHQRMAMLEENHARVMETAELQHQAELQDFASNIEQKANSLIMEYKNELQSAEEHFSHKIKELTSENELKISRLQEEKDSLLKKVQEGASLAMQRVQNKHDLEKKRLQSAIQPLQEENNSLKQQIEQLQRELASETVVKENLKSSLDQQSANVQKLESTNRALESTIKTLEEDVYTMKNKIIELEGILKSANVERDGLVEKLIAEETLRRKLHNTIQELKGNIRVFCRVRPPLGDGESAQIAFPDQNSEASTIEIVAQAPGSSLTGNGIKQYAFNFDRVFSPETTNEDVFNELSQLIQSAMDGYNVCIFAYGQTGSGKTHTMSSNTGMIPSSVRMIYNRSTSLKERGWEYRMEGQFLEIYNETIIDLLASGNEEEKGKKKLEIYHDTKAGRTTITNITSEPLDTPEQVTWLLDQASKNRSVAATNANEHSSRSHSVFMLHLNGSNSTTGETCRSTLNLIDLAGSERLSSSQSVGERLKETQAINKSLSCLGDVIHALGSGKEGTYIPYRNSKLTNLLQYSLGGNSKTLMFVNISPLKQHVPETLCSLRFATKVNNTQIGTARKVTK</sequence>
<dbReference type="EC" id="5.6.1.4" evidence="1"/>
<dbReference type="EMBL" id="CU329670">
    <property type="protein sequence ID" value="CAB65811.1"/>
    <property type="molecule type" value="Genomic_DNA"/>
</dbReference>
<dbReference type="PIR" id="T50240">
    <property type="entry name" value="T50240"/>
</dbReference>
<dbReference type="RefSeq" id="NP_593458.1">
    <property type="nucleotide sequence ID" value="NM_001018891.2"/>
</dbReference>
<dbReference type="SMR" id="Q9US03"/>
<dbReference type="BioGRID" id="279782">
    <property type="interactions" value="16"/>
</dbReference>
<dbReference type="FunCoup" id="Q9US03">
    <property type="interactions" value="198"/>
</dbReference>
<dbReference type="STRING" id="284812.Q9US03"/>
<dbReference type="iPTMnet" id="Q9US03"/>
<dbReference type="PaxDb" id="4896-SPAC664.10.1"/>
<dbReference type="EnsemblFungi" id="SPAC664.10.1">
    <property type="protein sequence ID" value="SPAC664.10.1:pep"/>
    <property type="gene ID" value="SPAC664.10"/>
</dbReference>
<dbReference type="GeneID" id="2543360"/>
<dbReference type="KEGG" id="spo:2543360"/>
<dbReference type="PomBase" id="SPAC664.10">
    <property type="gene designation" value="klp2"/>
</dbReference>
<dbReference type="VEuPathDB" id="FungiDB:SPAC664.10"/>
<dbReference type="eggNOG" id="KOG0239">
    <property type="taxonomic scope" value="Eukaryota"/>
</dbReference>
<dbReference type="HOGENOM" id="CLU_001485_12_1_1"/>
<dbReference type="InParanoid" id="Q9US03"/>
<dbReference type="OMA" id="WEYRMEG"/>
<dbReference type="PhylomeDB" id="Q9US03"/>
<dbReference type="PRO" id="PR:Q9US03"/>
<dbReference type="Proteomes" id="UP000002485">
    <property type="component" value="Chromosome I"/>
</dbReference>
<dbReference type="GO" id="GO:0000235">
    <property type="term" value="C:astral microtubule"/>
    <property type="evidence" value="ECO:0000314"/>
    <property type="project" value="PomBase"/>
</dbReference>
<dbReference type="GO" id="GO:0055028">
    <property type="term" value="C:cortical microtubule"/>
    <property type="evidence" value="ECO:0000314"/>
    <property type="project" value="PomBase"/>
</dbReference>
<dbReference type="GO" id="GO:0005737">
    <property type="term" value="C:cytoplasm"/>
    <property type="evidence" value="ECO:0000318"/>
    <property type="project" value="GO_Central"/>
</dbReference>
<dbReference type="GO" id="GO:0005881">
    <property type="term" value="C:cytoplasmic microtubule"/>
    <property type="evidence" value="ECO:0000314"/>
    <property type="project" value="PomBase"/>
</dbReference>
<dbReference type="GO" id="GO:0005871">
    <property type="term" value="C:kinesin complex"/>
    <property type="evidence" value="ECO:0000318"/>
    <property type="project" value="GO_Central"/>
</dbReference>
<dbReference type="GO" id="GO:0000776">
    <property type="term" value="C:kinetochore"/>
    <property type="evidence" value="ECO:0000314"/>
    <property type="project" value="PomBase"/>
</dbReference>
<dbReference type="GO" id="GO:0090619">
    <property type="term" value="C:meiotic spindle pole"/>
    <property type="evidence" value="ECO:0000314"/>
    <property type="project" value="PomBase"/>
</dbReference>
<dbReference type="GO" id="GO:0005874">
    <property type="term" value="C:microtubule"/>
    <property type="evidence" value="ECO:0000318"/>
    <property type="project" value="GO_Central"/>
</dbReference>
<dbReference type="GO" id="GO:0015630">
    <property type="term" value="C:microtubule cytoskeleton"/>
    <property type="evidence" value="ECO:0007005"/>
    <property type="project" value="PomBase"/>
</dbReference>
<dbReference type="GO" id="GO:0036449">
    <property type="term" value="C:microtubule minus-end"/>
    <property type="evidence" value="ECO:0000314"/>
    <property type="project" value="PomBase"/>
</dbReference>
<dbReference type="GO" id="GO:0005815">
    <property type="term" value="C:microtubule organizing center"/>
    <property type="evidence" value="ECO:0000318"/>
    <property type="project" value="GO_Central"/>
</dbReference>
<dbReference type="GO" id="GO:0035371">
    <property type="term" value="C:microtubule plus-end"/>
    <property type="evidence" value="ECO:0000314"/>
    <property type="project" value="PomBase"/>
</dbReference>
<dbReference type="GO" id="GO:0005872">
    <property type="term" value="C:minus-end kinesin complex"/>
    <property type="evidence" value="ECO:0000314"/>
    <property type="project" value="PomBase"/>
</dbReference>
<dbReference type="GO" id="GO:0072686">
    <property type="term" value="C:mitotic spindle"/>
    <property type="evidence" value="ECO:0000314"/>
    <property type="project" value="PomBase"/>
</dbReference>
<dbReference type="GO" id="GO:1990537">
    <property type="term" value="C:mitotic spindle polar microtubule"/>
    <property type="evidence" value="ECO:0000314"/>
    <property type="project" value="PomBase"/>
</dbReference>
<dbReference type="GO" id="GO:0005634">
    <property type="term" value="C:nucleus"/>
    <property type="evidence" value="ECO:0000314"/>
    <property type="project" value="PomBase"/>
</dbReference>
<dbReference type="GO" id="GO:0005827">
    <property type="term" value="C:polar microtubule"/>
    <property type="evidence" value="ECO:0000314"/>
    <property type="project" value="PomBase"/>
</dbReference>
<dbReference type="GO" id="GO:0005524">
    <property type="term" value="F:ATP binding"/>
    <property type="evidence" value="ECO:0000255"/>
    <property type="project" value="PomBase"/>
</dbReference>
<dbReference type="GO" id="GO:0016887">
    <property type="term" value="F:ATP hydrolysis activity"/>
    <property type="evidence" value="ECO:0000318"/>
    <property type="project" value="GO_Central"/>
</dbReference>
<dbReference type="GO" id="GO:0008017">
    <property type="term" value="F:microtubule binding"/>
    <property type="evidence" value="ECO:0000314"/>
    <property type="project" value="PomBase"/>
</dbReference>
<dbReference type="GO" id="GO:0003777">
    <property type="term" value="F:microtubule motor activity"/>
    <property type="evidence" value="ECO:0000318"/>
    <property type="project" value="GO_Central"/>
</dbReference>
<dbReference type="GO" id="GO:0008569">
    <property type="term" value="F:minus-end-directed microtubule motor activity"/>
    <property type="evidence" value="ECO:0000314"/>
    <property type="project" value="PomBase"/>
</dbReference>
<dbReference type="GO" id="GO:0031122">
    <property type="term" value="P:cytoplasmic microtubule organization"/>
    <property type="evidence" value="ECO:0000315"/>
    <property type="project" value="PomBase"/>
</dbReference>
<dbReference type="GO" id="GO:0030951">
    <property type="term" value="P:establishment or maintenance of microtubule cytoskeleton polarity"/>
    <property type="evidence" value="ECO:0000315"/>
    <property type="project" value="PomBase"/>
</dbReference>
<dbReference type="GO" id="GO:0000742">
    <property type="term" value="P:karyogamy involved in conjugation with cellular fusion"/>
    <property type="evidence" value="ECO:0000316"/>
    <property type="project" value="PomBase"/>
</dbReference>
<dbReference type="GO" id="GO:1990571">
    <property type="term" value="P:meiotic centromere clustering"/>
    <property type="evidence" value="ECO:0000315"/>
    <property type="project" value="PomBase"/>
</dbReference>
<dbReference type="GO" id="GO:0090306">
    <property type="term" value="P:meiotic spindle assembly"/>
    <property type="evidence" value="ECO:0000315"/>
    <property type="project" value="PomBase"/>
</dbReference>
<dbReference type="GO" id="GO:0140642">
    <property type="term" value="P:meiotic spindle formation (spindle phase two)"/>
    <property type="evidence" value="ECO:0000315"/>
    <property type="project" value="PomBase"/>
</dbReference>
<dbReference type="GO" id="GO:1990810">
    <property type="term" value="P:microtubule anchoring at mitotic spindle pole body"/>
    <property type="evidence" value="ECO:0000316"/>
    <property type="project" value="PomBase"/>
</dbReference>
<dbReference type="GO" id="GO:0001578">
    <property type="term" value="P:microtubule bundle formation"/>
    <property type="evidence" value="ECO:0000314"/>
    <property type="project" value="PomBase"/>
</dbReference>
<dbReference type="GO" id="GO:0051012">
    <property type="term" value="P:microtubule sliding"/>
    <property type="evidence" value="ECO:0000315"/>
    <property type="project" value="PomBase"/>
</dbReference>
<dbReference type="GO" id="GO:0007018">
    <property type="term" value="P:microtubule-based movement"/>
    <property type="evidence" value="ECO:0000318"/>
    <property type="project" value="GO_Central"/>
</dbReference>
<dbReference type="GO" id="GO:0031534">
    <property type="term" value="P:minus-end directed microtubule sliding"/>
    <property type="evidence" value="ECO:0000315"/>
    <property type="project" value="PomBase"/>
</dbReference>
<dbReference type="GO" id="GO:1990942">
    <property type="term" value="P:mitotic metaphase chromosome recapture"/>
    <property type="evidence" value="ECO:0000315"/>
    <property type="project" value="PomBase"/>
</dbReference>
<dbReference type="GO" id="GO:0090307">
    <property type="term" value="P:mitotic spindle assembly"/>
    <property type="evidence" value="ECO:0000318"/>
    <property type="project" value="GO_Central"/>
</dbReference>
<dbReference type="GO" id="GO:0000022">
    <property type="term" value="P:mitotic spindle elongation"/>
    <property type="evidence" value="ECO:0000315"/>
    <property type="project" value="PomBase"/>
</dbReference>
<dbReference type="GO" id="GO:0140641">
    <property type="term" value="P:mitotic spindle formation (spindle phase two)"/>
    <property type="evidence" value="ECO:0000315"/>
    <property type="project" value="PomBase"/>
</dbReference>
<dbReference type="GO" id="GO:0051256">
    <property type="term" value="P:mitotic spindle midzone assembly"/>
    <property type="evidence" value="ECO:0000314"/>
    <property type="project" value="PomBase"/>
</dbReference>
<dbReference type="GO" id="GO:0007052">
    <property type="term" value="P:mitotic spindle organization"/>
    <property type="evidence" value="ECO:0000269"/>
    <property type="project" value="PomBase"/>
</dbReference>
<dbReference type="GO" id="GO:0090561">
    <property type="term" value="P:nuclear migration during mitotic telophase"/>
    <property type="evidence" value="ECO:0000316"/>
    <property type="project" value="PomBase"/>
</dbReference>
<dbReference type="GO" id="GO:0000743">
    <property type="term" value="P:nuclear migration involved in conjugation with cellular fusion"/>
    <property type="evidence" value="ECO:0000315"/>
    <property type="project" value="PomBase"/>
</dbReference>
<dbReference type="GO" id="GO:0031535">
    <property type="term" value="P:plus-end directed microtubule sliding"/>
    <property type="evidence" value="ECO:0000314"/>
    <property type="project" value="PomBase"/>
</dbReference>
<dbReference type="CDD" id="cd01366">
    <property type="entry name" value="KISc_C_terminal"/>
    <property type="match status" value="1"/>
</dbReference>
<dbReference type="FunFam" id="3.40.850.10:FF:000065">
    <property type="entry name" value="Kinesin-like protein"/>
    <property type="match status" value="1"/>
</dbReference>
<dbReference type="Gene3D" id="3.40.850.10">
    <property type="entry name" value="Kinesin motor domain"/>
    <property type="match status" value="1"/>
</dbReference>
<dbReference type="InterPro" id="IPR027640">
    <property type="entry name" value="Kinesin-like_fam"/>
</dbReference>
<dbReference type="InterPro" id="IPR019821">
    <property type="entry name" value="Kinesin_motor_CS"/>
</dbReference>
<dbReference type="InterPro" id="IPR001752">
    <property type="entry name" value="Kinesin_motor_dom"/>
</dbReference>
<dbReference type="InterPro" id="IPR036961">
    <property type="entry name" value="Kinesin_motor_dom_sf"/>
</dbReference>
<dbReference type="InterPro" id="IPR027417">
    <property type="entry name" value="P-loop_NTPase"/>
</dbReference>
<dbReference type="PANTHER" id="PTHR47972">
    <property type="entry name" value="KINESIN-LIKE PROTEIN KLP-3"/>
    <property type="match status" value="1"/>
</dbReference>
<dbReference type="PANTHER" id="PTHR47972:SF45">
    <property type="entry name" value="PROTEIN CLARET SEGREGATIONAL"/>
    <property type="match status" value="1"/>
</dbReference>
<dbReference type="Pfam" id="PF00225">
    <property type="entry name" value="Kinesin"/>
    <property type="match status" value="1"/>
</dbReference>
<dbReference type="PRINTS" id="PR00380">
    <property type="entry name" value="KINESINHEAVY"/>
</dbReference>
<dbReference type="SMART" id="SM00129">
    <property type="entry name" value="KISc"/>
    <property type="match status" value="1"/>
</dbReference>
<dbReference type="SUPFAM" id="SSF52540">
    <property type="entry name" value="P-loop containing nucleoside triphosphate hydrolases"/>
    <property type="match status" value="1"/>
</dbReference>
<dbReference type="PROSITE" id="PS00411">
    <property type="entry name" value="KINESIN_MOTOR_1"/>
    <property type="match status" value="1"/>
</dbReference>
<dbReference type="PROSITE" id="PS50067">
    <property type="entry name" value="KINESIN_MOTOR_2"/>
    <property type="match status" value="1"/>
</dbReference>